<reference key="1">
    <citation type="journal article" date="2010" name="Genome Biol.">
        <title>Structure and dynamics of the pan-genome of Streptococcus pneumoniae and closely related species.</title>
        <authorList>
            <person name="Donati C."/>
            <person name="Hiller N.L."/>
            <person name="Tettelin H."/>
            <person name="Muzzi A."/>
            <person name="Croucher N.J."/>
            <person name="Angiuoli S.V."/>
            <person name="Oggioni M."/>
            <person name="Dunning Hotopp J.C."/>
            <person name="Hu F.Z."/>
            <person name="Riley D.R."/>
            <person name="Covacci A."/>
            <person name="Mitchell T.J."/>
            <person name="Bentley S.D."/>
            <person name="Kilian M."/>
            <person name="Ehrlich G.D."/>
            <person name="Rappuoli R."/>
            <person name="Moxon E.R."/>
            <person name="Masignani V."/>
        </authorList>
    </citation>
    <scope>NUCLEOTIDE SEQUENCE [LARGE SCALE GENOMIC DNA]</scope>
    <source>
        <strain>Hungary19A-6</strain>
    </source>
</reference>
<comment type="subunit">
    <text evidence="1">Part of the 50S ribosomal subunit. Contacts protein L32.</text>
</comment>
<comment type="similarity">
    <text evidence="1">Belongs to the bacterial ribosomal protein bL17 family.</text>
</comment>
<proteinExistence type="inferred from homology"/>
<organism>
    <name type="scientific">Streptococcus pneumoniae (strain Hungary19A-6)</name>
    <dbReference type="NCBI Taxonomy" id="487214"/>
    <lineage>
        <taxon>Bacteria</taxon>
        <taxon>Bacillati</taxon>
        <taxon>Bacillota</taxon>
        <taxon>Bacilli</taxon>
        <taxon>Lactobacillales</taxon>
        <taxon>Streptococcaceae</taxon>
        <taxon>Streptococcus</taxon>
    </lineage>
</organism>
<name>RL17_STRPI</name>
<feature type="chain" id="PRO_1000144491" description="Large ribosomal subunit protein bL17">
    <location>
        <begin position="1"/>
        <end position="128"/>
    </location>
</feature>
<gene>
    <name evidence="1" type="primary">rplQ</name>
    <name type="ordered locus">SPH_0350</name>
</gene>
<protein>
    <recommendedName>
        <fullName evidence="1">Large ribosomal subunit protein bL17</fullName>
    </recommendedName>
    <alternativeName>
        <fullName evidence="2">50S ribosomal protein L17</fullName>
    </alternativeName>
</protein>
<keyword id="KW-0687">Ribonucleoprotein</keyword>
<keyword id="KW-0689">Ribosomal protein</keyword>
<sequence>MAYRKLGRTSSQRKAMLRDLTTDLLINESIVTTEARAKEIRKTVEKMITLGKRGDLHARRQAAAFVRNEIASENYDEATDKYTSTTALQKLFSEIAPRYAERNGGYTRILKTEPRRGDAAPMAIIELV</sequence>
<dbReference type="EMBL" id="CP000936">
    <property type="protein sequence ID" value="ACA37065.1"/>
    <property type="molecule type" value="Genomic_DNA"/>
</dbReference>
<dbReference type="RefSeq" id="WP_000331493.1">
    <property type="nucleotide sequence ID" value="NC_010380.1"/>
</dbReference>
<dbReference type="SMR" id="B1I8M5"/>
<dbReference type="GeneID" id="93738984"/>
<dbReference type="KEGG" id="spv:SPH_0350"/>
<dbReference type="HOGENOM" id="CLU_074407_2_2_9"/>
<dbReference type="Proteomes" id="UP000002163">
    <property type="component" value="Chromosome"/>
</dbReference>
<dbReference type="GO" id="GO:0022625">
    <property type="term" value="C:cytosolic large ribosomal subunit"/>
    <property type="evidence" value="ECO:0007669"/>
    <property type="project" value="TreeGrafter"/>
</dbReference>
<dbReference type="GO" id="GO:0003735">
    <property type="term" value="F:structural constituent of ribosome"/>
    <property type="evidence" value="ECO:0007669"/>
    <property type="project" value="InterPro"/>
</dbReference>
<dbReference type="GO" id="GO:0006412">
    <property type="term" value="P:translation"/>
    <property type="evidence" value="ECO:0007669"/>
    <property type="project" value="UniProtKB-UniRule"/>
</dbReference>
<dbReference type="FunFam" id="3.90.1030.10:FF:000002">
    <property type="entry name" value="50S ribosomal protein L17"/>
    <property type="match status" value="1"/>
</dbReference>
<dbReference type="Gene3D" id="3.90.1030.10">
    <property type="entry name" value="Ribosomal protein L17"/>
    <property type="match status" value="1"/>
</dbReference>
<dbReference type="HAMAP" id="MF_01368">
    <property type="entry name" value="Ribosomal_bL17"/>
    <property type="match status" value="1"/>
</dbReference>
<dbReference type="InterPro" id="IPR000456">
    <property type="entry name" value="Ribosomal_bL17"/>
</dbReference>
<dbReference type="InterPro" id="IPR047859">
    <property type="entry name" value="Ribosomal_bL17_CS"/>
</dbReference>
<dbReference type="InterPro" id="IPR036373">
    <property type="entry name" value="Ribosomal_bL17_sf"/>
</dbReference>
<dbReference type="NCBIfam" id="TIGR00059">
    <property type="entry name" value="L17"/>
    <property type="match status" value="1"/>
</dbReference>
<dbReference type="PANTHER" id="PTHR14413:SF16">
    <property type="entry name" value="LARGE RIBOSOMAL SUBUNIT PROTEIN BL17M"/>
    <property type="match status" value="1"/>
</dbReference>
<dbReference type="PANTHER" id="PTHR14413">
    <property type="entry name" value="RIBOSOMAL PROTEIN L17"/>
    <property type="match status" value="1"/>
</dbReference>
<dbReference type="Pfam" id="PF01196">
    <property type="entry name" value="Ribosomal_L17"/>
    <property type="match status" value="1"/>
</dbReference>
<dbReference type="SUPFAM" id="SSF64263">
    <property type="entry name" value="Prokaryotic ribosomal protein L17"/>
    <property type="match status" value="1"/>
</dbReference>
<dbReference type="PROSITE" id="PS01167">
    <property type="entry name" value="RIBOSOMAL_L17"/>
    <property type="match status" value="1"/>
</dbReference>
<accession>B1I8M5</accession>
<evidence type="ECO:0000255" key="1">
    <source>
        <dbReference type="HAMAP-Rule" id="MF_01368"/>
    </source>
</evidence>
<evidence type="ECO:0000305" key="2"/>